<dbReference type="EC" id="2.1.2.9" evidence="1"/>
<dbReference type="EMBL" id="CP000950">
    <property type="protein sequence ID" value="ACA66628.1"/>
    <property type="molecule type" value="Genomic_DNA"/>
</dbReference>
<dbReference type="RefSeq" id="WP_002209020.1">
    <property type="nucleotide sequence ID" value="NZ_CP009792.1"/>
</dbReference>
<dbReference type="SMR" id="B1JJH7"/>
<dbReference type="GeneID" id="57974363"/>
<dbReference type="KEGG" id="ypy:YPK_0315"/>
<dbReference type="PATRIC" id="fig|502800.11.peg.922"/>
<dbReference type="GO" id="GO:0005829">
    <property type="term" value="C:cytosol"/>
    <property type="evidence" value="ECO:0007669"/>
    <property type="project" value="TreeGrafter"/>
</dbReference>
<dbReference type="GO" id="GO:0004479">
    <property type="term" value="F:methionyl-tRNA formyltransferase activity"/>
    <property type="evidence" value="ECO:0007669"/>
    <property type="project" value="UniProtKB-UniRule"/>
</dbReference>
<dbReference type="CDD" id="cd08646">
    <property type="entry name" value="FMT_core_Met-tRNA-FMT_N"/>
    <property type="match status" value="1"/>
</dbReference>
<dbReference type="CDD" id="cd08704">
    <property type="entry name" value="Met_tRNA_FMT_C"/>
    <property type="match status" value="1"/>
</dbReference>
<dbReference type="FunFam" id="3.10.25.10:FF:000001">
    <property type="entry name" value="Methionyl-tRNA formyltransferase"/>
    <property type="match status" value="1"/>
</dbReference>
<dbReference type="FunFam" id="3.40.50.12230:FF:000001">
    <property type="entry name" value="Methionyl-tRNA formyltransferase"/>
    <property type="match status" value="1"/>
</dbReference>
<dbReference type="FunFam" id="3.40.50.170:FF:000003">
    <property type="entry name" value="Methionyl-tRNA formyltransferase"/>
    <property type="match status" value="1"/>
</dbReference>
<dbReference type="Gene3D" id="3.10.25.10">
    <property type="entry name" value="Formyl transferase, C-terminal domain"/>
    <property type="match status" value="1"/>
</dbReference>
<dbReference type="Gene3D" id="3.40.50.170">
    <property type="entry name" value="Formyl transferase, N-terminal domain"/>
    <property type="match status" value="1"/>
</dbReference>
<dbReference type="HAMAP" id="MF_00182">
    <property type="entry name" value="Formyl_trans"/>
    <property type="match status" value="1"/>
</dbReference>
<dbReference type="InterPro" id="IPR005794">
    <property type="entry name" value="Fmt"/>
</dbReference>
<dbReference type="InterPro" id="IPR005793">
    <property type="entry name" value="Formyl_trans_C"/>
</dbReference>
<dbReference type="InterPro" id="IPR037022">
    <property type="entry name" value="Formyl_trans_C_sf"/>
</dbReference>
<dbReference type="InterPro" id="IPR002376">
    <property type="entry name" value="Formyl_transf_N"/>
</dbReference>
<dbReference type="InterPro" id="IPR036477">
    <property type="entry name" value="Formyl_transf_N_sf"/>
</dbReference>
<dbReference type="InterPro" id="IPR011034">
    <property type="entry name" value="Formyl_transferase-like_C_sf"/>
</dbReference>
<dbReference type="InterPro" id="IPR001555">
    <property type="entry name" value="GART_AS"/>
</dbReference>
<dbReference type="InterPro" id="IPR044135">
    <property type="entry name" value="Met-tRNA-FMT_C"/>
</dbReference>
<dbReference type="InterPro" id="IPR041711">
    <property type="entry name" value="Met-tRNA-FMT_N"/>
</dbReference>
<dbReference type="NCBIfam" id="TIGR00460">
    <property type="entry name" value="fmt"/>
    <property type="match status" value="1"/>
</dbReference>
<dbReference type="PANTHER" id="PTHR11138">
    <property type="entry name" value="METHIONYL-TRNA FORMYLTRANSFERASE"/>
    <property type="match status" value="1"/>
</dbReference>
<dbReference type="PANTHER" id="PTHR11138:SF5">
    <property type="entry name" value="METHIONYL-TRNA FORMYLTRANSFERASE, MITOCHONDRIAL"/>
    <property type="match status" value="1"/>
</dbReference>
<dbReference type="Pfam" id="PF02911">
    <property type="entry name" value="Formyl_trans_C"/>
    <property type="match status" value="1"/>
</dbReference>
<dbReference type="Pfam" id="PF00551">
    <property type="entry name" value="Formyl_trans_N"/>
    <property type="match status" value="1"/>
</dbReference>
<dbReference type="SUPFAM" id="SSF50486">
    <property type="entry name" value="FMT C-terminal domain-like"/>
    <property type="match status" value="1"/>
</dbReference>
<dbReference type="SUPFAM" id="SSF53328">
    <property type="entry name" value="Formyltransferase"/>
    <property type="match status" value="1"/>
</dbReference>
<dbReference type="PROSITE" id="PS00373">
    <property type="entry name" value="GART"/>
    <property type="match status" value="1"/>
</dbReference>
<evidence type="ECO:0000255" key="1">
    <source>
        <dbReference type="HAMAP-Rule" id="MF_00182"/>
    </source>
</evidence>
<protein>
    <recommendedName>
        <fullName evidence="1">Methionyl-tRNA formyltransferase</fullName>
        <ecNumber evidence="1">2.1.2.9</ecNumber>
    </recommendedName>
</protein>
<comment type="function">
    <text evidence="1">Attaches a formyl group to the free amino group of methionyl-tRNA(fMet). The formyl group appears to play a dual role in the initiator identity of N-formylmethionyl-tRNA by promoting its recognition by IF2 and preventing the misappropriation of this tRNA by the elongation apparatus.</text>
</comment>
<comment type="catalytic activity">
    <reaction evidence="1">
        <text>L-methionyl-tRNA(fMet) + (6R)-10-formyltetrahydrofolate = N-formyl-L-methionyl-tRNA(fMet) + (6S)-5,6,7,8-tetrahydrofolate + H(+)</text>
        <dbReference type="Rhea" id="RHEA:24380"/>
        <dbReference type="Rhea" id="RHEA-COMP:9952"/>
        <dbReference type="Rhea" id="RHEA-COMP:9953"/>
        <dbReference type="ChEBI" id="CHEBI:15378"/>
        <dbReference type="ChEBI" id="CHEBI:57453"/>
        <dbReference type="ChEBI" id="CHEBI:78530"/>
        <dbReference type="ChEBI" id="CHEBI:78844"/>
        <dbReference type="ChEBI" id="CHEBI:195366"/>
        <dbReference type="EC" id="2.1.2.9"/>
    </reaction>
</comment>
<comment type="similarity">
    <text evidence="1">Belongs to the Fmt family.</text>
</comment>
<name>FMT_YERPY</name>
<proteinExistence type="inferred from homology"/>
<keyword id="KW-0648">Protein biosynthesis</keyword>
<keyword id="KW-0808">Transferase</keyword>
<feature type="chain" id="PRO_1000098466" description="Methionyl-tRNA formyltransferase">
    <location>
        <begin position="1"/>
        <end position="315"/>
    </location>
</feature>
<feature type="binding site" evidence="1">
    <location>
        <begin position="113"/>
        <end position="116"/>
    </location>
    <ligand>
        <name>(6S)-5,6,7,8-tetrahydrofolate</name>
        <dbReference type="ChEBI" id="CHEBI:57453"/>
    </ligand>
</feature>
<accession>B1JJH7</accession>
<gene>
    <name evidence="1" type="primary">fmt</name>
    <name type="ordered locus">YPK_0315</name>
</gene>
<organism>
    <name type="scientific">Yersinia pseudotuberculosis serotype O:3 (strain YPIII)</name>
    <dbReference type="NCBI Taxonomy" id="502800"/>
    <lineage>
        <taxon>Bacteria</taxon>
        <taxon>Pseudomonadati</taxon>
        <taxon>Pseudomonadota</taxon>
        <taxon>Gammaproteobacteria</taxon>
        <taxon>Enterobacterales</taxon>
        <taxon>Yersiniaceae</taxon>
        <taxon>Yersinia</taxon>
    </lineage>
</organism>
<reference key="1">
    <citation type="submission" date="2008-02" db="EMBL/GenBank/DDBJ databases">
        <title>Complete sequence of Yersinia pseudotuberculosis YPIII.</title>
        <authorList>
            <consortium name="US DOE Joint Genome Institute"/>
            <person name="Copeland A."/>
            <person name="Lucas S."/>
            <person name="Lapidus A."/>
            <person name="Glavina del Rio T."/>
            <person name="Dalin E."/>
            <person name="Tice H."/>
            <person name="Bruce D."/>
            <person name="Goodwin L."/>
            <person name="Pitluck S."/>
            <person name="Munk A.C."/>
            <person name="Brettin T."/>
            <person name="Detter J.C."/>
            <person name="Han C."/>
            <person name="Tapia R."/>
            <person name="Schmutz J."/>
            <person name="Larimer F."/>
            <person name="Land M."/>
            <person name="Hauser L."/>
            <person name="Challacombe J.F."/>
            <person name="Green L."/>
            <person name="Lindler L.E."/>
            <person name="Nikolich M.P."/>
            <person name="Richardson P."/>
        </authorList>
    </citation>
    <scope>NUCLEOTIDE SEQUENCE [LARGE SCALE GENOMIC DNA]</scope>
    <source>
        <strain>YPIII</strain>
    </source>
</reference>
<sequence length="315" mass="34140">MSDSLRIIFAGTPDFAARHLGALLSSQHKIVGVFTQPDRPAGRGNKLTPSPVKILAEHHGIPVFQPKSLRPEENQHLVADLNADIMVVVAYGLILPAAVLAMPRLGCINVHGSLLPRWRGAAPIQRSVWAGDEKTGITIMQMDIGLDTGAMLHKIECAIQPEDTSATLYDKLAQLGPQGLLITLQQLAAGTALAEVQNETQATYAEKLSKEEAKLDWTLSATQLERCIRAFNPWPVSYFIVDEQPIKVWQAQVLPAGEDAEPGTIIHADKHGIQVATADGVLNITQLQPAGKKAMSAADLLNSRREWFIPGSQLV</sequence>